<protein>
    <recommendedName>
        <fullName evidence="3">Mastoparan-V1</fullName>
        <shortName evidence="3">MP-V1</shortName>
    </recommendedName>
</protein>
<organism>
    <name type="scientific">Vespula vulgaris</name>
    <name type="common">Yellow jacket</name>
    <name type="synonym">Wasp</name>
    <dbReference type="NCBI Taxonomy" id="7454"/>
    <lineage>
        <taxon>Eukaryota</taxon>
        <taxon>Metazoa</taxon>
        <taxon>Ecdysozoa</taxon>
        <taxon>Arthropoda</taxon>
        <taxon>Hexapoda</taxon>
        <taxon>Insecta</taxon>
        <taxon>Pterygota</taxon>
        <taxon>Neoptera</taxon>
        <taxon>Endopterygota</taxon>
        <taxon>Hymenoptera</taxon>
        <taxon>Apocrita</taxon>
        <taxon>Aculeata</taxon>
        <taxon>Vespoidea</taxon>
        <taxon>Vespidae</taxon>
        <taxon>Vespinae</taxon>
        <taxon>Vespula</taxon>
    </lineage>
</organism>
<reference key="1">
    <citation type="journal article" date="2003" name="Int. Arch. Allergy Immunol.">
        <title>Inflammatory role of two venom components of yellow jackets (Vespula vulgaris): a mast cell degranulating peptide mastoparan and phospholipase A1.</title>
        <authorList>
            <person name="King T.P."/>
            <person name="Jim S.Y."/>
            <person name="Wittkowski K.M."/>
        </authorList>
    </citation>
    <scope>PROTEIN SEQUENCE</scope>
    <scope>FUNCTION</scope>
    <scope>SUBCELLULAR LOCATION</scope>
    <scope>AMIDATION AT ASN-15</scope>
    <source>
        <tissue>Venom</tissue>
    </source>
</reference>
<reference key="2">
    <citation type="journal article" date="2016" name="Molecules">
        <title>MP-V1 from the venom of social wasp vespula vulgaris is a de novo type of mastoparan that displays superior antimicrobial activities.</title>
        <authorList>
            <person name="Kim Y."/>
            <person name="Son M."/>
            <person name="Noh E.Y."/>
            <person name="Kim S."/>
            <person name="Kim C."/>
            <person name="Yeo J.H."/>
            <person name="Park C."/>
            <person name="Lee K.W."/>
            <person name="Bang W.Y."/>
        </authorList>
    </citation>
    <scope>FUNCTION</scope>
    <scope>SYNTHESIS</scope>
    <scope>SUBCELLULAR LOCATION</scope>
</reference>
<feature type="peptide" id="PRO_0000247267" description="Mastoparan-V1" evidence="1">
    <location>
        <begin position="1"/>
        <end position="15"/>
    </location>
</feature>
<feature type="site" description="May enhance the stabilization of the helical conformation but leads to a lower membrane selectivity compared to its homologs that do not have a C-terminal Asn" evidence="6">
    <location>
        <position position="15"/>
    </location>
</feature>
<feature type="modified residue" description="Asparagine amide" evidence="1">
    <location>
        <position position="15"/>
    </location>
</feature>
<accession>P0C1Q8</accession>
<dbReference type="GO" id="GO:0005576">
    <property type="term" value="C:extracellular region"/>
    <property type="evidence" value="ECO:0007669"/>
    <property type="project" value="UniProtKB-SubCell"/>
</dbReference>
<dbReference type="GO" id="GO:0016020">
    <property type="term" value="C:membrane"/>
    <property type="evidence" value="ECO:0007669"/>
    <property type="project" value="UniProtKB-KW"/>
</dbReference>
<dbReference type="GO" id="GO:0044218">
    <property type="term" value="C:other organism cell membrane"/>
    <property type="evidence" value="ECO:0007669"/>
    <property type="project" value="UniProtKB-KW"/>
</dbReference>
<dbReference type="GO" id="GO:0042742">
    <property type="term" value="P:defense response to bacterium"/>
    <property type="evidence" value="ECO:0007669"/>
    <property type="project" value="UniProtKB-KW"/>
</dbReference>
<dbReference type="GO" id="GO:0050832">
    <property type="term" value="P:defense response to fungus"/>
    <property type="evidence" value="ECO:0007669"/>
    <property type="project" value="UniProtKB-KW"/>
</dbReference>
<dbReference type="GO" id="GO:0045087">
    <property type="term" value="P:innate immune response"/>
    <property type="evidence" value="ECO:0007669"/>
    <property type="project" value="UniProtKB-KW"/>
</dbReference>
<dbReference type="GO" id="GO:0031640">
    <property type="term" value="P:killing of cells of another organism"/>
    <property type="evidence" value="ECO:0007669"/>
    <property type="project" value="UniProtKB-KW"/>
</dbReference>
<name>MAST1_VESVU</name>
<evidence type="ECO:0000269" key="1">
    <source>
    </source>
</evidence>
<evidence type="ECO:0000269" key="2">
    <source>
    </source>
</evidence>
<evidence type="ECO:0000303" key="3">
    <source>
    </source>
</evidence>
<evidence type="ECO:0000305" key="4"/>
<evidence type="ECO:0000305" key="5">
    <source>
    </source>
</evidence>
<evidence type="ECO:0000305" key="6">
    <source>
    </source>
</evidence>
<comment type="function">
    <text evidence="1 2">Antimicrobial peptide with high activity on Gram-positive (S.mutans, and S.aureus), and Gram-negative bacteria (S.enterica), as well as on fungi (C.albicans, C.glabrata, and C.neoformans). Shows a potent hemolysis on human erythrocytes (PubMed:27104500). Together with phospholipase A1, stimulates prostaglandin E2 release from murine peritoneal cells and macrophages (PubMed:12759486).</text>
</comment>
<comment type="subcellular location">
    <subcellularLocation>
        <location evidence="2">Secreted</location>
    </subcellularLocation>
    <subcellularLocation>
        <location evidence="4">Target cell membrane</location>
    </subcellularLocation>
    <text evidence="6">Assumes an amphipathic alpha-helical conformation in a membrane-like environment.</text>
</comment>
<comment type="tissue specificity">
    <text evidence="5">Expressed by the venom gland.</text>
</comment>
<comment type="similarity">
    <text evidence="4">Belongs to the MCD family. Mastoparan subfamily.</text>
</comment>
<proteinExistence type="evidence at protein level"/>
<sequence>INWKKIKSIIKAAMN</sequence>
<keyword id="KW-0027">Amidation</keyword>
<keyword id="KW-0044">Antibiotic</keyword>
<keyword id="KW-0929">Antimicrobial</keyword>
<keyword id="KW-0903">Direct protein sequencing</keyword>
<keyword id="KW-0295">Fungicide</keyword>
<keyword id="KW-0391">Immunity</keyword>
<keyword id="KW-0399">Innate immunity</keyword>
<keyword id="KW-0472">Membrane</keyword>
<keyword id="KW-0964">Secreted</keyword>
<keyword id="KW-1052">Target cell membrane</keyword>
<keyword id="KW-1053">Target membrane</keyword>